<evidence type="ECO:0000250" key="1"/>
<evidence type="ECO:0000269" key="2">
    <source>
    </source>
</evidence>
<evidence type="ECO:0000305" key="3"/>
<reference key="1">
    <citation type="journal article" date="1991" name="Mol. Microbiol.">
        <title>Cloning and sequencing of the structural gene for the porin protein of Bordetella pertussis.</title>
        <authorList>
            <person name="Li Z.M."/>
            <person name="Hannah J.H."/>
            <person name="Stibitz S."/>
            <person name="Nguyen N.Y."/>
            <person name="Manclark C.R."/>
            <person name="Brennan M.J."/>
        </authorList>
    </citation>
    <scope>NUCLEOTIDE SEQUENCE [GENOMIC DNA]</scope>
    <scope>PROTEIN SEQUENCE OF 21-43</scope>
    <source>
        <strain>10901</strain>
        <strain>347</strain>
    </source>
</reference>
<reference key="2">
    <citation type="journal article" date="2003" name="Nat. Genet.">
        <title>Comparative analysis of the genome sequences of Bordetella pertussis, Bordetella parapertussis and Bordetella bronchiseptica.</title>
        <authorList>
            <person name="Parkhill J."/>
            <person name="Sebaihia M."/>
            <person name="Preston A."/>
            <person name="Murphy L.D."/>
            <person name="Thomson N.R."/>
            <person name="Harris D.E."/>
            <person name="Holden M.T.G."/>
            <person name="Churcher C.M."/>
            <person name="Bentley S.D."/>
            <person name="Mungall K.L."/>
            <person name="Cerdeno-Tarraga A.-M."/>
            <person name="Temple L."/>
            <person name="James K.D."/>
            <person name="Harris B."/>
            <person name="Quail M.A."/>
            <person name="Achtman M."/>
            <person name="Atkin R."/>
            <person name="Baker S."/>
            <person name="Basham D."/>
            <person name="Bason N."/>
            <person name="Cherevach I."/>
            <person name="Chillingworth T."/>
            <person name="Collins M."/>
            <person name="Cronin A."/>
            <person name="Davis P."/>
            <person name="Doggett J."/>
            <person name="Feltwell T."/>
            <person name="Goble A."/>
            <person name="Hamlin N."/>
            <person name="Hauser H."/>
            <person name="Holroyd S."/>
            <person name="Jagels K."/>
            <person name="Leather S."/>
            <person name="Moule S."/>
            <person name="Norberczak H."/>
            <person name="O'Neil S."/>
            <person name="Ormond D."/>
            <person name="Price C."/>
            <person name="Rabbinowitsch E."/>
            <person name="Rutter S."/>
            <person name="Sanders M."/>
            <person name="Saunders D."/>
            <person name="Seeger K."/>
            <person name="Sharp S."/>
            <person name="Simmonds M."/>
            <person name="Skelton J."/>
            <person name="Squares R."/>
            <person name="Squares S."/>
            <person name="Stevens K."/>
            <person name="Unwin L."/>
            <person name="Whitehead S."/>
            <person name="Barrell B.G."/>
            <person name="Maskell D.J."/>
        </authorList>
    </citation>
    <scope>NUCLEOTIDE SEQUENCE [LARGE SCALE GENOMIC DNA]</scope>
    <source>
        <strain>Tohama I / ATCC BAA-589 / NCTC 13251</strain>
    </source>
</reference>
<sequence length="385" mass="41046">MKKTLLAAALLAGFAGAAQAETSVTLYGIIDTGIGYNDVDFKVKGANADDSDFKYNHSRFGMINGVQNGSRWGLRGTEDLGDGLQAVFQLESGFNSGNGNSAQDGRLFGRQATIGLQSESWGRLDFGRQTNIASKYFGSIDPFGAGFGQANIGMGMSAMNTVRYDNMVMYQTPSYSGFQFGIGYSFSANDKDADAVNRVGFATADNVRAITTGLRYVNGPLNVALSYDQLNASNNQAQGEVDATPRSYGLGGSYDFEVVKLALAYARTTDGWFGGQGYPVAVTLPSGDKFGGFGVNTFADGFKANSYMVGLSAPIGGASNVFGSWQMVDPKLTGGDEKMNVFSLGYTYDLSKRTNLYAYGSYAKNFAFLEDAKSTAVGVGIRHRF</sequence>
<keyword id="KW-0998">Cell outer membrane</keyword>
<keyword id="KW-0903">Direct protein sequencing</keyword>
<keyword id="KW-0406">Ion transport</keyword>
<keyword id="KW-0472">Membrane</keyword>
<keyword id="KW-0626">Porin</keyword>
<keyword id="KW-1185">Reference proteome</keyword>
<keyword id="KW-0732">Signal</keyword>
<keyword id="KW-0812">Transmembrane</keyword>
<keyword id="KW-1134">Transmembrane beta strand</keyword>
<keyword id="KW-0813">Transport</keyword>
<name>OMP_BORPE</name>
<protein>
    <recommendedName>
        <fullName>Outer membrane porin protein BP0840</fullName>
    </recommendedName>
</protein>
<proteinExistence type="evidence at protein level"/>
<gene>
    <name type="ordered locus">BP0840</name>
</gene>
<accession>Q04064</accession>
<comment type="function">
    <text>Forms anion selective channels.</text>
</comment>
<comment type="subunit">
    <text evidence="1">Homotrimer.</text>
</comment>
<comment type="subcellular location">
    <subcellularLocation>
        <location>Cell outer membrane</location>
        <topology>Multi-pass membrane protein</topology>
    </subcellularLocation>
</comment>
<comment type="similarity">
    <text evidence="3">To bacterial outer membrane proteins and porins.</text>
</comment>
<feature type="signal peptide" evidence="2">
    <location>
        <begin position="1"/>
        <end position="20"/>
    </location>
</feature>
<feature type="chain" id="PRO_0000025208" description="Outer membrane porin protein BP0840">
    <location>
        <begin position="21"/>
        <end position="385"/>
    </location>
</feature>
<feature type="sequence variant" description="In strain: 10901.">
    <original>I</original>
    <variation>T</variation>
    <location>
        <position position="29"/>
    </location>
</feature>
<dbReference type="EMBL" id="X58488">
    <property type="protein sequence ID" value="CAA41398.1"/>
    <property type="molecule type" value="Genomic_DNA"/>
</dbReference>
<dbReference type="EMBL" id="BX640413">
    <property type="protein sequence ID" value="CAE41143.1"/>
    <property type="molecule type" value="Genomic_DNA"/>
</dbReference>
<dbReference type="PIR" id="S16480">
    <property type="entry name" value="S16480"/>
</dbReference>
<dbReference type="RefSeq" id="NP_879650.1">
    <property type="nucleotide sequence ID" value="NC_002929.2"/>
</dbReference>
<dbReference type="RefSeq" id="WP_010930034.1">
    <property type="nucleotide sequence ID" value="NZ_CP039022.1"/>
</dbReference>
<dbReference type="SMR" id="Q04064"/>
<dbReference type="STRING" id="257313.BP0840"/>
<dbReference type="TCDB" id="1.B.1.4.1">
    <property type="family name" value="the general bacterial porin (gbp) family"/>
</dbReference>
<dbReference type="PaxDb" id="257313-BP0840"/>
<dbReference type="KEGG" id="bpe:BP0840"/>
<dbReference type="PATRIC" id="fig|257313.5.peg.894"/>
<dbReference type="eggNOG" id="COG3203">
    <property type="taxonomic scope" value="Bacteria"/>
</dbReference>
<dbReference type="HOGENOM" id="CLU_038238_1_2_4"/>
<dbReference type="Proteomes" id="UP000002676">
    <property type="component" value="Chromosome"/>
</dbReference>
<dbReference type="GO" id="GO:0009279">
    <property type="term" value="C:cell outer membrane"/>
    <property type="evidence" value="ECO:0007669"/>
    <property type="project" value="UniProtKB-SubCell"/>
</dbReference>
<dbReference type="GO" id="GO:0046930">
    <property type="term" value="C:pore complex"/>
    <property type="evidence" value="ECO:0007669"/>
    <property type="project" value="UniProtKB-KW"/>
</dbReference>
<dbReference type="GO" id="GO:0015288">
    <property type="term" value="F:porin activity"/>
    <property type="evidence" value="ECO:0007669"/>
    <property type="project" value="UniProtKB-KW"/>
</dbReference>
<dbReference type="GO" id="GO:0034220">
    <property type="term" value="P:monoatomic ion transmembrane transport"/>
    <property type="evidence" value="ECO:0007669"/>
    <property type="project" value="InterPro"/>
</dbReference>
<dbReference type="CDD" id="cd00342">
    <property type="entry name" value="gram_neg_porins"/>
    <property type="match status" value="1"/>
</dbReference>
<dbReference type="Gene3D" id="2.40.160.10">
    <property type="entry name" value="Porin"/>
    <property type="match status" value="1"/>
</dbReference>
<dbReference type="InterPro" id="IPR050298">
    <property type="entry name" value="Gram-neg_bact_OMP"/>
</dbReference>
<dbReference type="InterPro" id="IPR033900">
    <property type="entry name" value="Gram_neg_porin_domain"/>
</dbReference>
<dbReference type="InterPro" id="IPR023614">
    <property type="entry name" value="Porin_dom_sf"/>
</dbReference>
<dbReference type="InterPro" id="IPR001702">
    <property type="entry name" value="Porin_Gram-ve"/>
</dbReference>
<dbReference type="InterPro" id="IPR002299">
    <property type="entry name" value="Porin_Neis"/>
</dbReference>
<dbReference type="PANTHER" id="PTHR34501:SF9">
    <property type="entry name" value="MAJOR OUTER MEMBRANE PROTEIN P.IA"/>
    <property type="match status" value="1"/>
</dbReference>
<dbReference type="PANTHER" id="PTHR34501">
    <property type="entry name" value="PROTEIN YDDL-RELATED"/>
    <property type="match status" value="1"/>
</dbReference>
<dbReference type="Pfam" id="PF13609">
    <property type="entry name" value="Porin_4"/>
    <property type="match status" value="1"/>
</dbReference>
<dbReference type="PRINTS" id="PR00182">
    <property type="entry name" value="ECOLNEIPORIN"/>
</dbReference>
<dbReference type="PRINTS" id="PR00184">
    <property type="entry name" value="NEISSPPORIN"/>
</dbReference>
<dbReference type="SUPFAM" id="SSF56935">
    <property type="entry name" value="Porins"/>
    <property type="match status" value="1"/>
</dbReference>
<organism>
    <name type="scientific">Bordetella pertussis (strain Tohama I / ATCC BAA-589 / NCTC 13251)</name>
    <dbReference type="NCBI Taxonomy" id="257313"/>
    <lineage>
        <taxon>Bacteria</taxon>
        <taxon>Pseudomonadati</taxon>
        <taxon>Pseudomonadota</taxon>
        <taxon>Betaproteobacteria</taxon>
        <taxon>Burkholderiales</taxon>
        <taxon>Alcaligenaceae</taxon>
        <taxon>Bordetella</taxon>
    </lineage>
</organism>